<sequence length="150" mass="17076">MRPGSTPASRRKSRPPRRVSPPLPTTSTRSPGRPSAPEQRKAPRATPKKRFRPGTRALMEIRKYQKSTELLIRKAPFSRLVREVCMTYACGLNYSWQSMALMALQEASEAFLVRLFEDSYLCSLHAKRVTLYVQDIQLARRIRGVTEGLG</sequence>
<reference key="1">
    <citation type="submission" date="2006-06" db="EMBL/GenBank/DDBJ databases">
        <authorList>
            <consortium name="Sanger Xenopus tropicalis EST/cDNA project"/>
        </authorList>
    </citation>
    <scope>NUCLEOTIDE SEQUENCE [LARGE SCALE MRNA]</scope>
    <source>
        <tissue>Egg</tissue>
    </source>
</reference>
<evidence type="ECO:0000250" key="1">
    <source>
        <dbReference type="UniProtKB" id="P49450"/>
    </source>
</evidence>
<evidence type="ECO:0000256" key="2">
    <source>
        <dbReference type="SAM" id="MobiDB-lite"/>
    </source>
</evidence>
<evidence type="ECO:0000305" key="3"/>
<proteinExistence type="evidence at transcript level"/>
<gene>
    <name type="primary">cenpa</name>
    <name type="ORF">TEgg036k02.1</name>
</gene>
<accession>Q28I31</accession>
<name>CENPA_XENTR</name>
<protein>
    <recommendedName>
        <fullName>Histone H3-like centromeric protein A</fullName>
    </recommendedName>
    <alternativeName>
        <fullName>Centromere protein A</fullName>
        <shortName>CENP-A</shortName>
    </alternativeName>
</protein>
<feature type="chain" id="PRO_0000249475" description="Histone H3-like centromeric protein A">
    <location>
        <begin position="1"/>
        <end position="150"/>
    </location>
</feature>
<feature type="region of interest" description="Disordered" evidence="2">
    <location>
        <begin position="1"/>
        <end position="56"/>
    </location>
</feature>
<feature type="region of interest" description="H3-like">
    <location>
        <begin position="53"/>
        <end position="150"/>
    </location>
</feature>
<feature type="compositionally biased region" description="Low complexity" evidence="2">
    <location>
        <begin position="25"/>
        <end position="37"/>
    </location>
</feature>
<feature type="compositionally biased region" description="Basic residues" evidence="2">
    <location>
        <begin position="42"/>
        <end position="53"/>
    </location>
</feature>
<comment type="function">
    <text evidence="1">Histone H3-like nucleosomal protein that is specifically found in centromeric nucleosomes. Replaces conventional H3 in the nucleosome core of centromeric chromatin that serves as an assembly site for the inner kinetochore. The presence of CENPA subtly modifies the nucleosome structure and the way DNA is wrapped around the nucleosome and gives rise to protruding DNA ends that are less well-ordered and rigid compared to nucleosomes containing histone H3. May serve as an epigenetic mark that propagates centromere identity through replication and cell division. Required for recruitment and assembly of kinetochore proteins, and as a consequence required for progress through mitosis, chromosome segregation and cytokinesis.</text>
</comment>
<comment type="subunit">
    <text evidence="1">Component of centromeric nucleosomes, where DNA is wrapped around a histone octamer core. The octamer contains two molecules each of H2A, H2B, CENPA and H4 assembled in one CENPA-H4 heterotetramer and two H2A-H2B heterodimers. CENPA modulates the DNA-binding characteristics of nucleosomes so that protruding DNA ends have higher flexibility than in nucleosomes containing conventional histone H3.</text>
</comment>
<comment type="subcellular location">
    <subcellularLocation>
        <location evidence="1">Nucleus</location>
    </subcellularLocation>
    <subcellularLocation>
        <location evidence="1">Chromosome</location>
        <location evidence="1">Centromere</location>
    </subcellularLocation>
    <text evidence="1">Localizes exclusively to sites of kinetochore assembly in centromeres. Occupies a compact domain at the inner kinetochore plate stretching across 2 thirds of the length of the constriction but encompassing only one third of the constriction width and height.</text>
</comment>
<comment type="similarity">
    <text evidence="3">Belongs to the histone H3 family.</text>
</comment>
<keyword id="KW-0137">Centromere</keyword>
<keyword id="KW-0158">Chromosome</keyword>
<keyword id="KW-0238">DNA-binding</keyword>
<keyword id="KW-0544">Nucleosome core</keyword>
<keyword id="KW-0539">Nucleus</keyword>
<keyword id="KW-1185">Reference proteome</keyword>
<organism>
    <name type="scientific">Xenopus tropicalis</name>
    <name type="common">Western clawed frog</name>
    <name type="synonym">Silurana tropicalis</name>
    <dbReference type="NCBI Taxonomy" id="8364"/>
    <lineage>
        <taxon>Eukaryota</taxon>
        <taxon>Metazoa</taxon>
        <taxon>Chordata</taxon>
        <taxon>Craniata</taxon>
        <taxon>Vertebrata</taxon>
        <taxon>Euteleostomi</taxon>
        <taxon>Amphibia</taxon>
        <taxon>Batrachia</taxon>
        <taxon>Anura</taxon>
        <taxon>Pipoidea</taxon>
        <taxon>Pipidae</taxon>
        <taxon>Xenopodinae</taxon>
        <taxon>Xenopus</taxon>
        <taxon>Silurana</taxon>
    </lineage>
</organism>
<dbReference type="EMBL" id="CR760620">
    <property type="protein sequence ID" value="CAJ81334.1"/>
    <property type="molecule type" value="mRNA"/>
</dbReference>
<dbReference type="RefSeq" id="NP_001016585.1">
    <property type="nucleotide sequence ID" value="NM_001016585.2"/>
</dbReference>
<dbReference type="RefSeq" id="XP_012823881.1">
    <property type="nucleotide sequence ID" value="XM_012968427.2"/>
</dbReference>
<dbReference type="RefSeq" id="XP_012823882.1">
    <property type="nucleotide sequence ID" value="XM_012968428.3"/>
</dbReference>
<dbReference type="RefSeq" id="XP_012823883.1">
    <property type="nucleotide sequence ID" value="XM_012968429.2"/>
</dbReference>
<dbReference type="RefSeq" id="XP_012823884.1">
    <property type="nucleotide sequence ID" value="XM_012968430.3"/>
</dbReference>
<dbReference type="SMR" id="Q28I31"/>
<dbReference type="FunCoup" id="Q28I31">
    <property type="interactions" value="835"/>
</dbReference>
<dbReference type="STRING" id="8364.ENSXETP00000047754"/>
<dbReference type="PaxDb" id="8364-ENSXETP00000011337"/>
<dbReference type="GeneID" id="549339"/>
<dbReference type="KEGG" id="xtr:549339"/>
<dbReference type="AGR" id="Xenbase:XB-GENE-484234"/>
<dbReference type="CTD" id="1058"/>
<dbReference type="Xenbase" id="XB-GENE-484234">
    <property type="gene designation" value="cenpa"/>
</dbReference>
<dbReference type="eggNOG" id="KOG1745">
    <property type="taxonomic scope" value="Eukaryota"/>
</dbReference>
<dbReference type="HOGENOM" id="CLU_078295_3_2_1"/>
<dbReference type="InParanoid" id="Q28I31"/>
<dbReference type="OMA" id="LKFVPHG"/>
<dbReference type="OrthoDB" id="842664at2759"/>
<dbReference type="PhylomeDB" id="Q28I31"/>
<dbReference type="TreeFam" id="TF354293"/>
<dbReference type="Proteomes" id="UP000008143">
    <property type="component" value="Chromosome 8"/>
</dbReference>
<dbReference type="Bgee" id="ENSXETG00000034599">
    <property type="expression patterns" value="Expressed in early embryo and 14 other cell types or tissues"/>
</dbReference>
<dbReference type="GO" id="GO:0000775">
    <property type="term" value="C:chromosome, centromeric region"/>
    <property type="evidence" value="ECO:0007669"/>
    <property type="project" value="UniProtKB-SubCell"/>
</dbReference>
<dbReference type="GO" id="GO:0000786">
    <property type="term" value="C:nucleosome"/>
    <property type="evidence" value="ECO:0007669"/>
    <property type="project" value="UniProtKB-KW"/>
</dbReference>
<dbReference type="GO" id="GO:0005634">
    <property type="term" value="C:nucleus"/>
    <property type="evidence" value="ECO:0007669"/>
    <property type="project" value="UniProtKB-SubCell"/>
</dbReference>
<dbReference type="GO" id="GO:0003677">
    <property type="term" value="F:DNA binding"/>
    <property type="evidence" value="ECO:0007669"/>
    <property type="project" value="UniProtKB-KW"/>
</dbReference>
<dbReference type="GO" id="GO:0046982">
    <property type="term" value="F:protein heterodimerization activity"/>
    <property type="evidence" value="ECO:0007669"/>
    <property type="project" value="InterPro"/>
</dbReference>
<dbReference type="GO" id="GO:0030527">
    <property type="term" value="F:structural constituent of chromatin"/>
    <property type="evidence" value="ECO:0007669"/>
    <property type="project" value="InterPro"/>
</dbReference>
<dbReference type="CDD" id="cd22911">
    <property type="entry name" value="HFD_H3"/>
    <property type="match status" value="1"/>
</dbReference>
<dbReference type="FunFam" id="1.10.20.10:FF:000088">
    <property type="entry name" value="Histone H3-like centromeric protein CSE4"/>
    <property type="match status" value="1"/>
</dbReference>
<dbReference type="Gene3D" id="1.10.20.10">
    <property type="entry name" value="Histone, subunit A"/>
    <property type="match status" value="1"/>
</dbReference>
<dbReference type="InterPro" id="IPR009072">
    <property type="entry name" value="Histone-fold"/>
</dbReference>
<dbReference type="InterPro" id="IPR007125">
    <property type="entry name" value="Histone_H2A/H2B/H3"/>
</dbReference>
<dbReference type="InterPro" id="IPR000164">
    <property type="entry name" value="Histone_H3/CENP-A"/>
</dbReference>
<dbReference type="PANTHER" id="PTHR45810:SF17">
    <property type="entry name" value="HISTONE H3-LIKE CENTROMERIC PROTEIN A"/>
    <property type="match status" value="1"/>
</dbReference>
<dbReference type="PANTHER" id="PTHR45810">
    <property type="entry name" value="HISTONE H3.2"/>
    <property type="match status" value="1"/>
</dbReference>
<dbReference type="Pfam" id="PF00125">
    <property type="entry name" value="Histone"/>
    <property type="match status" value="1"/>
</dbReference>
<dbReference type="SMART" id="SM00428">
    <property type="entry name" value="H3"/>
    <property type="match status" value="1"/>
</dbReference>
<dbReference type="SUPFAM" id="SSF47113">
    <property type="entry name" value="Histone-fold"/>
    <property type="match status" value="1"/>
</dbReference>
<dbReference type="PROSITE" id="PS00959">
    <property type="entry name" value="HISTONE_H3_2"/>
    <property type="match status" value="1"/>
</dbReference>